<protein>
    <recommendedName>
        <fullName>Cytochrome b</fullName>
    </recommendedName>
    <alternativeName>
        <fullName>Complex III subunit 3</fullName>
    </alternativeName>
    <alternativeName>
        <fullName>Complex III subunit III</fullName>
    </alternativeName>
    <alternativeName>
        <fullName>Cytochrome b-c1 complex subunit 3</fullName>
    </alternativeName>
    <alternativeName>
        <fullName>Ubiquinol-cytochrome-c reductase complex cytochrome b subunit</fullName>
    </alternativeName>
</protein>
<reference key="1">
    <citation type="submission" date="2001-12" db="EMBL/GenBank/DDBJ databases">
        <title>Phylogenetic position of the Philippine flying lemur (order Dermoptera) within Eutheria using DNA sequences of Cyt b and ND5 genes.</title>
        <authorList>
            <person name="Bastian S.T. Jr."/>
            <person name="Tanaka K."/>
            <person name="Anunciado R.P.V."/>
            <person name="Natural N.G."/>
            <person name="Sumalde A.C."/>
            <person name="Namikawa T."/>
        </authorList>
    </citation>
    <scope>NUCLEOTIDE SEQUENCE [GENOMIC DNA]</scope>
</reference>
<geneLocation type="mitochondrion"/>
<keyword id="KW-0249">Electron transport</keyword>
<keyword id="KW-0349">Heme</keyword>
<keyword id="KW-0408">Iron</keyword>
<keyword id="KW-0472">Membrane</keyword>
<keyword id="KW-0479">Metal-binding</keyword>
<keyword id="KW-0496">Mitochondrion</keyword>
<keyword id="KW-0999">Mitochondrion inner membrane</keyword>
<keyword id="KW-0679">Respiratory chain</keyword>
<keyword id="KW-0812">Transmembrane</keyword>
<keyword id="KW-1133">Transmembrane helix</keyword>
<keyword id="KW-0813">Transport</keyword>
<keyword id="KW-0830">Ubiquinone</keyword>
<feature type="chain" id="PRO_0000060851" description="Cytochrome b">
    <location>
        <begin position="1"/>
        <end position="379"/>
    </location>
</feature>
<feature type="transmembrane region" description="Helical" evidence="2">
    <location>
        <begin position="33"/>
        <end position="53"/>
    </location>
</feature>
<feature type="transmembrane region" description="Helical" evidence="2">
    <location>
        <begin position="77"/>
        <end position="98"/>
    </location>
</feature>
<feature type="transmembrane region" description="Helical" evidence="2">
    <location>
        <begin position="113"/>
        <end position="133"/>
    </location>
</feature>
<feature type="transmembrane region" description="Helical" evidence="2">
    <location>
        <begin position="178"/>
        <end position="198"/>
    </location>
</feature>
<feature type="transmembrane region" description="Helical" evidence="2">
    <location>
        <begin position="226"/>
        <end position="246"/>
    </location>
</feature>
<feature type="transmembrane region" description="Helical" evidence="2">
    <location>
        <begin position="288"/>
        <end position="308"/>
    </location>
</feature>
<feature type="transmembrane region" description="Helical" evidence="2">
    <location>
        <begin position="320"/>
        <end position="340"/>
    </location>
</feature>
<feature type="transmembrane region" description="Helical" evidence="2">
    <location>
        <begin position="347"/>
        <end position="367"/>
    </location>
</feature>
<feature type="binding site" description="axial binding residue" evidence="2">
    <location>
        <position position="83"/>
    </location>
    <ligand>
        <name>heme b</name>
        <dbReference type="ChEBI" id="CHEBI:60344"/>
        <label>b562</label>
    </ligand>
    <ligandPart>
        <name>Fe</name>
        <dbReference type="ChEBI" id="CHEBI:18248"/>
    </ligandPart>
</feature>
<feature type="binding site" description="axial binding residue" evidence="2">
    <location>
        <position position="97"/>
    </location>
    <ligand>
        <name>heme b</name>
        <dbReference type="ChEBI" id="CHEBI:60344"/>
        <label>b566</label>
    </ligand>
    <ligandPart>
        <name>Fe</name>
        <dbReference type="ChEBI" id="CHEBI:18248"/>
    </ligandPart>
</feature>
<feature type="binding site" description="axial binding residue" evidence="2">
    <location>
        <position position="182"/>
    </location>
    <ligand>
        <name>heme b</name>
        <dbReference type="ChEBI" id="CHEBI:60344"/>
        <label>b562</label>
    </ligand>
    <ligandPart>
        <name>Fe</name>
        <dbReference type="ChEBI" id="CHEBI:18248"/>
    </ligandPart>
</feature>
<feature type="binding site" description="axial binding residue" evidence="2">
    <location>
        <position position="196"/>
    </location>
    <ligand>
        <name>heme b</name>
        <dbReference type="ChEBI" id="CHEBI:60344"/>
        <label>b566</label>
    </ligand>
    <ligandPart>
        <name>Fe</name>
        <dbReference type="ChEBI" id="CHEBI:18248"/>
    </ligandPart>
</feature>
<feature type="binding site" evidence="2">
    <location>
        <position position="201"/>
    </location>
    <ligand>
        <name>a ubiquinone</name>
        <dbReference type="ChEBI" id="CHEBI:16389"/>
    </ligand>
</feature>
<gene>
    <name type="primary">MT-CYB</name>
    <name type="synonym">COB</name>
    <name type="synonym">CYTB</name>
    <name type="synonym">MTCYB</name>
</gene>
<accession>Q76LN6</accession>
<name>CYB_CYNVO</name>
<dbReference type="EMBL" id="AB075974">
    <property type="protein sequence ID" value="BAC82489.1"/>
    <property type="molecule type" value="Genomic_DNA"/>
</dbReference>
<dbReference type="SMR" id="Q76LN6"/>
<dbReference type="GO" id="GO:0005743">
    <property type="term" value="C:mitochondrial inner membrane"/>
    <property type="evidence" value="ECO:0007669"/>
    <property type="project" value="UniProtKB-SubCell"/>
</dbReference>
<dbReference type="GO" id="GO:0045275">
    <property type="term" value="C:respiratory chain complex III"/>
    <property type="evidence" value="ECO:0007669"/>
    <property type="project" value="InterPro"/>
</dbReference>
<dbReference type="GO" id="GO:0046872">
    <property type="term" value="F:metal ion binding"/>
    <property type="evidence" value="ECO:0007669"/>
    <property type="project" value="UniProtKB-KW"/>
</dbReference>
<dbReference type="GO" id="GO:0008121">
    <property type="term" value="F:ubiquinol-cytochrome-c reductase activity"/>
    <property type="evidence" value="ECO:0007669"/>
    <property type="project" value="InterPro"/>
</dbReference>
<dbReference type="GO" id="GO:0006122">
    <property type="term" value="P:mitochondrial electron transport, ubiquinol to cytochrome c"/>
    <property type="evidence" value="ECO:0007669"/>
    <property type="project" value="TreeGrafter"/>
</dbReference>
<dbReference type="CDD" id="cd00290">
    <property type="entry name" value="cytochrome_b_C"/>
    <property type="match status" value="1"/>
</dbReference>
<dbReference type="CDD" id="cd00284">
    <property type="entry name" value="Cytochrome_b_N"/>
    <property type="match status" value="1"/>
</dbReference>
<dbReference type="FunFam" id="1.20.810.10:FF:000002">
    <property type="entry name" value="Cytochrome b"/>
    <property type="match status" value="1"/>
</dbReference>
<dbReference type="Gene3D" id="1.20.810.10">
    <property type="entry name" value="Cytochrome Bc1 Complex, Chain C"/>
    <property type="match status" value="1"/>
</dbReference>
<dbReference type="InterPro" id="IPR005798">
    <property type="entry name" value="Cyt_b/b6_C"/>
</dbReference>
<dbReference type="InterPro" id="IPR036150">
    <property type="entry name" value="Cyt_b/b6_C_sf"/>
</dbReference>
<dbReference type="InterPro" id="IPR005797">
    <property type="entry name" value="Cyt_b/b6_N"/>
</dbReference>
<dbReference type="InterPro" id="IPR027387">
    <property type="entry name" value="Cytb/b6-like_sf"/>
</dbReference>
<dbReference type="InterPro" id="IPR030689">
    <property type="entry name" value="Cytochrome_b"/>
</dbReference>
<dbReference type="InterPro" id="IPR048260">
    <property type="entry name" value="Cytochrome_b_C_euk/bac"/>
</dbReference>
<dbReference type="InterPro" id="IPR048259">
    <property type="entry name" value="Cytochrome_b_N_euk/bac"/>
</dbReference>
<dbReference type="InterPro" id="IPR016174">
    <property type="entry name" value="Di-haem_cyt_TM"/>
</dbReference>
<dbReference type="PANTHER" id="PTHR19271">
    <property type="entry name" value="CYTOCHROME B"/>
    <property type="match status" value="1"/>
</dbReference>
<dbReference type="PANTHER" id="PTHR19271:SF16">
    <property type="entry name" value="CYTOCHROME B"/>
    <property type="match status" value="1"/>
</dbReference>
<dbReference type="Pfam" id="PF00032">
    <property type="entry name" value="Cytochrom_B_C"/>
    <property type="match status" value="1"/>
</dbReference>
<dbReference type="Pfam" id="PF00033">
    <property type="entry name" value="Cytochrome_B"/>
    <property type="match status" value="1"/>
</dbReference>
<dbReference type="PIRSF" id="PIRSF038885">
    <property type="entry name" value="COB"/>
    <property type="match status" value="1"/>
</dbReference>
<dbReference type="SUPFAM" id="SSF81648">
    <property type="entry name" value="a domain/subunit of cytochrome bc1 complex (Ubiquinol-cytochrome c reductase)"/>
    <property type="match status" value="1"/>
</dbReference>
<dbReference type="SUPFAM" id="SSF81342">
    <property type="entry name" value="Transmembrane di-heme cytochromes"/>
    <property type="match status" value="1"/>
</dbReference>
<dbReference type="PROSITE" id="PS51003">
    <property type="entry name" value="CYTB_CTER"/>
    <property type="match status" value="1"/>
</dbReference>
<dbReference type="PROSITE" id="PS51002">
    <property type="entry name" value="CYTB_NTER"/>
    <property type="match status" value="1"/>
</dbReference>
<comment type="function">
    <text evidence="2">Component of the ubiquinol-cytochrome c reductase complex (complex III or cytochrome b-c1 complex) that is part of the mitochondrial respiratory chain. The b-c1 complex mediates electron transfer from ubiquinol to cytochrome c. Contributes to the generation of a proton gradient across the mitochondrial membrane that is then used for ATP synthesis.</text>
</comment>
<comment type="cofactor">
    <cofactor evidence="2">
        <name>heme b</name>
        <dbReference type="ChEBI" id="CHEBI:60344"/>
    </cofactor>
    <text evidence="2">Binds 2 heme b groups non-covalently.</text>
</comment>
<comment type="subunit">
    <text evidence="2">The cytochrome bc1 complex contains 11 subunits: 3 respiratory subunits (MT-CYB, CYC1 and UQCRFS1), 2 core proteins (UQCRC1 and UQCRC2) and 6 low-molecular weight proteins (UQCRH/QCR6, UQCRB/QCR7, UQCRQ/QCR8, UQCR10/QCR9, UQCR11/QCR10 and a cleavage product of UQCRFS1). This cytochrome bc1 complex then forms a dimer.</text>
</comment>
<comment type="subcellular location">
    <subcellularLocation>
        <location evidence="2">Mitochondrion inner membrane</location>
        <topology evidence="2">Multi-pass membrane protein</topology>
    </subcellularLocation>
</comment>
<comment type="miscellaneous">
    <text evidence="1">Heme 1 (or BL or b562) is low-potential and absorbs at about 562 nm, and heme 2 (or BH or b566) is high-potential and absorbs at about 566 nm.</text>
</comment>
<comment type="similarity">
    <text evidence="3 4">Belongs to the cytochrome b family.</text>
</comment>
<comment type="caution">
    <text evidence="2">The full-length protein contains only eight transmembrane helices, not nine as predicted by bioinformatics tools.</text>
</comment>
<sequence length="379" mass="42631">MTNTRKSHPLLKILNHSFIDLPTPSNISMWWNFGSLLGICLMLQIMTGLLLAMHYTADTTTAFSSIAHICRDVNYGWIIRHAHANGASMFFICLFIHVGRNLYYGSFTYSKTWNTGIILLLTTMATAFMGYILPWGQMSFWGATVITNLLSAIPYIGTNMVEWIWGGFSVDKATLTRFFALHFILPFVISALAIVHLLFLHETGSNNPSGIPSNSDKIPFHPYYTIKDILGVLLLMTILLTLTLFSPDLLGDPDNYTPTNPLSTPPYIKPEWYFLFAYTILCSVPNKLGGVLALIMSILVLALIPALRMSKQRSMMFQPMSQCLFWALASDLLTLTWIGSQPMEYPLTLIGQTASLPHFSIILILMPLANFIENKLLKW</sequence>
<organism>
    <name type="scientific">Cynocephalus volans</name>
    <name type="common">Philippine flying lemur</name>
    <dbReference type="NCBI Taxonomy" id="110931"/>
    <lineage>
        <taxon>Eukaryota</taxon>
        <taxon>Metazoa</taxon>
        <taxon>Chordata</taxon>
        <taxon>Craniata</taxon>
        <taxon>Vertebrata</taxon>
        <taxon>Euteleostomi</taxon>
        <taxon>Mammalia</taxon>
        <taxon>Eutheria</taxon>
        <taxon>Euarchontoglires</taxon>
        <taxon>Dermoptera</taxon>
        <taxon>Cynocephalidae</taxon>
        <taxon>Cynocephalus</taxon>
    </lineage>
</organism>
<evidence type="ECO:0000250" key="1"/>
<evidence type="ECO:0000250" key="2">
    <source>
        <dbReference type="UniProtKB" id="P00157"/>
    </source>
</evidence>
<evidence type="ECO:0000255" key="3">
    <source>
        <dbReference type="PROSITE-ProRule" id="PRU00967"/>
    </source>
</evidence>
<evidence type="ECO:0000255" key="4">
    <source>
        <dbReference type="PROSITE-ProRule" id="PRU00968"/>
    </source>
</evidence>
<proteinExistence type="inferred from homology"/>